<organism>
    <name type="scientific">Clostridium beijerinckii (strain ATCC 51743 / NCIMB 8052)</name>
    <name type="common">Clostridium acetobutylicum</name>
    <dbReference type="NCBI Taxonomy" id="290402"/>
    <lineage>
        <taxon>Bacteria</taxon>
        <taxon>Bacillati</taxon>
        <taxon>Bacillota</taxon>
        <taxon>Clostridia</taxon>
        <taxon>Eubacteriales</taxon>
        <taxon>Clostridiaceae</taxon>
        <taxon>Clostridium</taxon>
    </lineage>
</organism>
<protein>
    <recommendedName>
        <fullName evidence="1">Gamma-glutamyl phosphate reductase</fullName>
        <shortName evidence="1">GPR</shortName>
        <ecNumber evidence="1">1.2.1.41</ecNumber>
    </recommendedName>
    <alternativeName>
        <fullName evidence="1">Glutamate-5-semialdehyde dehydrogenase</fullName>
    </alternativeName>
    <alternativeName>
        <fullName evidence="1">Glutamyl-gamma-semialdehyde dehydrogenase</fullName>
        <shortName evidence="1">GSA dehydrogenase</shortName>
    </alternativeName>
</protein>
<dbReference type="EC" id="1.2.1.41" evidence="1"/>
<dbReference type="EMBL" id="CP000721">
    <property type="protein sequence ID" value="ABR32215.1"/>
    <property type="molecule type" value="Genomic_DNA"/>
</dbReference>
<dbReference type="RefSeq" id="WP_011967390.1">
    <property type="nucleotide sequence ID" value="NC_009617.1"/>
</dbReference>
<dbReference type="SMR" id="A6LPD5"/>
<dbReference type="KEGG" id="cbe:Cbei_0025"/>
<dbReference type="eggNOG" id="COG0014">
    <property type="taxonomic scope" value="Bacteria"/>
</dbReference>
<dbReference type="HOGENOM" id="CLU_030231_0_0_9"/>
<dbReference type="UniPathway" id="UPA00098">
    <property type="reaction ID" value="UER00360"/>
</dbReference>
<dbReference type="Proteomes" id="UP000000565">
    <property type="component" value="Chromosome"/>
</dbReference>
<dbReference type="GO" id="GO:0005737">
    <property type="term" value="C:cytoplasm"/>
    <property type="evidence" value="ECO:0007669"/>
    <property type="project" value="UniProtKB-SubCell"/>
</dbReference>
<dbReference type="GO" id="GO:0004350">
    <property type="term" value="F:glutamate-5-semialdehyde dehydrogenase activity"/>
    <property type="evidence" value="ECO:0007669"/>
    <property type="project" value="UniProtKB-UniRule"/>
</dbReference>
<dbReference type="GO" id="GO:0050661">
    <property type="term" value="F:NADP binding"/>
    <property type="evidence" value="ECO:0007669"/>
    <property type="project" value="InterPro"/>
</dbReference>
<dbReference type="GO" id="GO:0055129">
    <property type="term" value="P:L-proline biosynthetic process"/>
    <property type="evidence" value="ECO:0007669"/>
    <property type="project" value="UniProtKB-UniRule"/>
</dbReference>
<dbReference type="CDD" id="cd07079">
    <property type="entry name" value="ALDH_F18-19_ProA-GPR"/>
    <property type="match status" value="1"/>
</dbReference>
<dbReference type="FunFam" id="3.40.309.10:FF:000006">
    <property type="entry name" value="Gamma-glutamyl phosphate reductase"/>
    <property type="match status" value="1"/>
</dbReference>
<dbReference type="Gene3D" id="3.40.605.10">
    <property type="entry name" value="Aldehyde Dehydrogenase, Chain A, domain 1"/>
    <property type="match status" value="1"/>
</dbReference>
<dbReference type="Gene3D" id="3.40.309.10">
    <property type="entry name" value="Aldehyde Dehydrogenase, Chain A, domain 2"/>
    <property type="match status" value="1"/>
</dbReference>
<dbReference type="HAMAP" id="MF_00412">
    <property type="entry name" value="ProA"/>
    <property type="match status" value="1"/>
</dbReference>
<dbReference type="InterPro" id="IPR016161">
    <property type="entry name" value="Ald_DH/histidinol_DH"/>
</dbReference>
<dbReference type="InterPro" id="IPR016163">
    <property type="entry name" value="Ald_DH_C"/>
</dbReference>
<dbReference type="InterPro" id="IPR016162">
    <property type="entry name" value="Ald_DH_N"/>
</dbReference>
<dbReference type="InterPro" id="IPR015590">
    <property type="entry name" value="Aldehyde_DH_dom"/>
</dbReference>
<dbReference type="InterPro" id="IPR020593">
    <property type="entry name" value="G-glutamylP_reductase_CS"/>
</dbReference>
<dbReference type="InterPro" id="IPR012134">
    <property type="entry name" value="Glu-5-SA_DH"/>
</dbReference>
<dbReference type="InterPro" id="IPR000965">
    <property type="entry name" value="GPR_dom"/>
</dbReference>
<dbReference type="NCBIfam" id="NF001221">
    <property type="entry name" value="PRK00197.1"/>
    <property type="match status" value="1"/>
</dbReference>
<dbReference type="NCBIfam" id="TIGR00407">
    <property type="entry name" value="proA"/>
    <property type="match status" value="1"/>
</dbReference>
<dbReference type="PANTHER" id="PTHR11063:SF8">
    <property type="entry name" value="DELTA-1-PYRROLINE-5-CARBOXYLATE SYNTHASE"/>
    <property type="match status" value="1"/>
</dbReference>
<dbReference type="PANTHER" id="PTHR11063">
    <property type="entry name" value="GLUTAMATE SEMIALDEHYDE DEHYDROGENASE"/>
    <property type="match status" value="1"/>
</dbReference>
<dbReference type="Pfam" id="PF00171">
    <property type="entry name" value="Aldedh"/>
    <property type="match status" value="2"/>
</dbReference>
<dbReference type="PIRSF" id="PIRSF000151">
    <property type="entry name" value="GPR"/>
    <property type="match status" value="1"/>
</dbReference>
<dbReference type="SUPFAM" id="SSF53720">
    <property type="entry name" value="ALDH-like"/>
    <property type="match status" value="1"/>
</dbReference>
<dbReference type="PROSITE" id="PS01223">
    <property type="entry name" value="PROA"/>
    <property type="match status" value="1"/>
</dbReference>
<gene>
    <name evidence="1" type="primary">proA</name>
    <name type="ordered locus">Cbei_0025</name>
</gene>
<comment type="function">
    <text evidence="1">Catalyzes the NADPH-dependent reduction of L-glutamate 5-phosphate into L-glutamate 5-semialdehyde and phosphate. The product spontaneously undergoes cyclization to form 1-pyrroline-5-carboxylate.</text>
</comment>
<comment type="catalytic activity">
    <reaction evidence="1">
        <text>L-glutamate 5-semialdehyde + phosphate + NADP(+) = L-glutamyl 5-phosphate + NADPH + H(+)</text>
        <dbReference type="Rhea" id="RHEA:19541"/>
        <dbReference type="ChEBI" id="CHEBI:15378"/>
        <dbReference type="ChEBI" id="CHEBI:43474"/>
        <dbReference type="ChEBI" id="CHEBI:57783"/>
        <dbReference type="ChEBI" id="CHEBI:58066"/>
        <dbReference type="ChEBI" id="CHEBI:58274"/>
        <dbReference type="ChEBI" id="CHEBI:58349"/>
        <dbReference type="EC" id="1.2.1.41"/>
    </reaction>
</comment>
<comment type="pathway">
    <text evidence="1">Amino-acid biosynthesis; L-proline biosynthesis; L-glutamate 5-semialdehyde from L-glutamate: step 2/2.</text>
</comment>
<comment type="subcellular location">
    <subcellularLocation>
        <location evidence="1">Cytoplasm</location>
    </subcellularLocation>
</comment>
<comment type="similarity">
    <text evidence="1">Belongs to the gamma-glutamyl phosphate reductase family.</text>
</comment>
<sequence length="414" mass="44803">MSELIIKGQNAKNASYDLGIASTKQKDDALMIMAEELIKAKGDIISANKIDLDAAVLKGTSKAMLDRLALTDERIESMAAGLKDVIKLQDPIGEVISMWQRPNGLQIGQKRVPLGVIGIIYEARPNVTCDAAGLCIKTGNAVILRGGSEAINSNKAIVKALTKGIERSGLPKASVQLVEDTSREVATEMMRLNEFIDVLIPRGGAGLIQAVLKNATVPVIETGTGNCHIYVDKDCDFEMAKNIVINAKASRPSVCNAAEKLLINEKIVEDFLPIVVKALRENGVAVKGDEVSQSIINDIEKAAEEDWGKEYLDYIIAVKVVKDVDEAISHINKYGTGHSEAIITESYKNSQKFLQRVDAAAVYVNASTRFTDGSEFGFGAEIGISTQKLHARGPMGLKELTTIKYIIYGNGQIR</sequence>
<evidence type="ECO:0000255" key="1">
    <source>
        <dbReference type="HAMAP-Rule" id="MF_00412"/>
    </source>
</evidence>
<proteinExistence type="inferred from homology"/>
<name>PROA_CLOB8</name>
<feature type="chain" id="PRO_1000080478" description="Gamma-glutamyl phosphate reductase">
    <location>
        <begin position="1"/>
        <end position="414"/>
    </location>
</feature>
<keyword id="KW-0028">Amino-acid biosynthesis</keyword>
<keyword id="KW-0963">Cytoplasm</keyword>
<keyword id="KW-0521">NADP</keyword>
<keyword id="KW-0560">Oxidoreductase</keyword>
<keyword id="KW-0641">Proline biosynthesis</keyword>
<reference key="1">
    <citation type="submission" date="2007-06" db="EMBL/GenBank/DDBJ databases">
        <title>Complete sequence of Clostridium beijerinckii NCIMB 8052.</title>
        <authorList>
            <consortium name="US DOE Joint Genome Institute"/>
            <person name="Copeland A."/>
            <person name="Lucas S."/>
            <person name="Lapidus A."/>
            <person name="Barry K."/>
            <person name="Detter J.C."/>
            <person name="Glavina del Rio T."/>
            <person name="Hammon N."/>
            <person name="Israni S."/>
            <person name="Dalin E."/>
            <person name="Tice H."/>
            <person name="Pitluck S."/>
            <person name="Sims D."/>
            <person name="Brettin T."/>
            <person name="Bruce D."/>
            <person name="Tapia R."/>
            <person name="Brainard J."/>
            <person name="Schmutz J."/>
            <person name="Larimer F."/>
            <person name="Land M."/>
            <person name="Hauser L."/>
            <person name="Kyrpides N."/>
            <person name="Mikhailova N."/>
            <person name="Bennet G."/>
            <person name="Cann I."/>
            <person name="Chen J.-S."/>
            <person name="Contreras A.L."/>
            <person name="Jones D."/>
            <person name="Kashket E."/>
            <person name="Mitchell W."/>
            <person name="Stoddard S."/>
            <person name="Schwarz W."/>
            <person name="Qureshi N."/>
            <person name="Young M."/>
            <person name="Shi Z."/>
            <person name="Ezeji T."/>
            <person name="White B."/>
            <person name="Blaschek H."/>
            <person name="Richardson P."/>
        </authorList>
    </citation>
    <scope>NUCLEOTIDE SEQUENCE [LARGE SCALE GENOMIC DNA]</scope>
    <source>
        <strain>ATCC 51743 / NCIMB 8052</strain>
    </source>
</reference>
<accession>A6LPD5</accession>